<accession>A5DWY0</accession>
<dbReference type="EMBL" id="CH981525">
    <property type="protein sequence ID" value="EDK43688.1"/>
    <property type="molecule type" value="Genomic_DNA"/>
</dbReference>
<dbReference type="RefSeq" id="XP_001527038.1">
    <property type="nucleotide sequence ID" value="XM_001526988.1"/>
</dbReference>
<dbReference type="SMR" id="A5DWY0"/>
<dbReference type="STRING" id="379508.A5DWY0"/>
<dbReference type="GeneID" id="5234417"/>
<dbReference type="KEGG" id="lel:PVL30_001839"/>
<dbReference type="VEuPathDB" id="FungiDB:LELG_01867"/>
<dbReference type="eggNOG" id="KOG3004">
    <property type="taxonomic scope" value="Eukaryota"/>
</dbReference>
<dbReference type="HOGENOM" id="CLU_068092_0_0_1"/>
<dbReference type="InParanoid" id="A5DWY0"/>
<dbReference type="OMA" id="DNIMHEM"/>
<dbReference type="OrthoDB" id="437078at2759"/>
<dbReference type="Proteomes" id="UP000001996">
    <property type="component" value="Unassembled WGS sequence"/>
</dbReference>
<dbReference type="GO" id="GO:0031298">
    <property type="term" value="C:replication fork protection complex"/>
    <property type="evidence" value="ECO:0007669"/>
    <property type="project" value="TreeGrafter"/>
</dbReference>
<dbReference type="GO" id="GO:0003677">
    <property type="term" value="F:DNA binding"/>
    <property type="evidence" value="ECO:0007669"/>
    <property type="project" value="TreeGrafter"/>
</dbReference>
<dbReference type="GO" id="GO:0006281">
    <property type="term" value="P:DNA repair"/>
    <property type="evidence" value="ECO:0007669"/>
    <property type="project" value="UniProtKB-KW"/>
</dbReference>
<dbReference type="GO" id="GO:0000076">
    <property type="term" value="P:DNA replication checkpoint signaling"/>
    <property type="evidence" value="ECO:0007669"/>
    <property type="project" value="InterPro"/>
</dbReference>
<dbReference type="GO" id="GO:0051321">
    <property type="term" value="P:meiotic cell cycle"/>
    <property type="evidence" value="ECO:0007669"/>
    <property type="project" value="UniProtKB-KW"/>
</dbReference>
<dbReference type="GO" id="GO:0043111">
    <property type="term" value="P:replication fork arrest"/>
    <property type="evidence" value="ECO:0007669"/>
    <property type="project" value="TreeGrafter"/>
</dbReference>
<dbReference type="GO" id="GO:0031297">
    <property type="term" value="P:replication fork processing"/>
    <property type="evidence" value="ECO:0007669"/>
    <property type="project" value="InterPro"/>
</dbReference>
<dbReference type="InterPro" id="IPR012923">
    <property type="entry name" value="Csm3"/>
</dbReference>
<dbReference type="InterPro" id="IPR040038">
    <property type="entry name" value="TIPIN/Csm3/Swi3"/>
</dbReference>
<dbReference type="PANTHER" id="PTHR13220">
    <property type="entry name" value="TIMELESS INTERACTING-RELATED"/>
    <property type="match status" value="1"/>
</dbReference>
<dbReference type="PANTHER" id="PTHR13220:SF11">
    <property type="entry name" value="TIMELESS-INTERACTING PROTEIN"/>
    <property type="match status" value="1"/>
</dbReference>
<dbReference type="Pfam" id="PF07962">
    <property type="entry name" value="Swi3"/>
    <property type="match status" value="1"/>
</dbReference>
<protein>
    <recommendedName>
        <fullName>Chromosome segregation in meiosis protein 3</fullName>
    </recommendedName>
</protein>
<evidence type="ECO:0000250" key="1"/>
<evidence type="ECO:0000256" key="2">
    <source>
        <dbReference type="SAM" id="MobiDB-lite"/>
    </source>
</evidence>
<evidence type="ECO:0000305" key="3"/>
<sequence length="350" mass="39721">MAQPSMSLTLKRLESDDASRSLQDMDPLNDSSNDNNILGIDEPLKLKSKKRIAKVDNERVLNKPQGLPYLIKNHHRLGRIVEQRDKKFAKQELRKLQSIHHSYKTPRQLKYDHEVETLGSILHFYQLWCHGMFPKANFKDCAYLVRNLGHRSSQLRLYRRELIEKEIFKLKVSKGIIDESSEVATRESESDGFTNTRSGNNDDSGDIFVSTGDNVYQNQMEFSGAQGQELPSPTLSEQATEQMERNDAAVSAVAAADDEYDDDWSFMNLELGIDAAPAPPSSSSSLPLSKSSNGLLNGSDKNNAETGTANREQYNNFDYENEIQNENENEIENEDDIDLAMELMREHDNI</sequence>
<organism>
    <name type="scientific">Lodderomyces elongisporus (strain ATCC 11503 / CBS 2605 / JCM 1781 / NBRC 1676 / NRRL YB-4239)</name>
    <name type="common">Yeast</name>
    <name type="synonym">Saccharomyces elongisporus</name>
    <dbReference type="NCBI Taxonomy" id="379508"/>
    <lineage>
        <taxon>Eukaryota</taxon>
        <taxon>Fungi</taxon>
        <taxon>Dikarya</taxon>
        <taxon>Ascomycota</taxon>
        <taxon>Saccharomycotina</taxon>
        <taxon>Pichiomycetes</taxon>
        <taxon>Debaryomycetaceae</taxon>
        <taxon>Candida/Lodderomyces clade</taxon>
        <taxon>Lodderomyces</taxon>
    </lineage>
</organism>
<gene>
    <name type="primary">CSM3</name>
    <name type="ORF">LELG_01867</name>
</gene>
<reference key="1">
    <citation type="journal article" date="2009" name="Nature">
        <title>Evolution of pathogenicity and sexual reproduction in eight Candida genomes.</title>
        <authorList>
            <person name="Butler G."/>
            <person name="Rasmussen M.D."/>
            <person name="Lin M.F."/>
            <person name="Santos M.A.S."/>
            <person name="Sakthikumar S."/>
            <person name="Munro C.A."/>
            <person name="Rheinbay E."/>
            <person name="Grabherr M."/>
            <person name="Forche A."/>
            <person name="Reedy J.L."/>
            <person name="Agrafioti I."/>
            <person name="Arnaud M.B."/>
            <person name="Bates S."/>
            <person name="Brown A.J.P."/>
            <person name="Brunke S."/>
            <person name="Costanzo M.C."/>
            <person name="Fitzpatrick D.A."/>
            <person name="de Groot P.W.J."/>
            <person name="Harris D."/>
            <person name="Hoyer L.L."/>
            <person name="Hube B."/>
            <person name="Klis F.M."/>
            <person name="Kodira C."/>
            <person name="Lennard N."/>
            <person name="Logue M.E."/>
            <person name="Martin R."/>
            <person name="Neiman A.M."/>
            <person name="Nikolaou E."/>
            <person name="Quail M.A."/>
            <person name="Quinn J."/>
            <person name="Santos M.C."/>
            <person name="Schmitzberger F.F."/>
            <person name="Sherlock G."/>
            <person name="Shah P."/>
            <person name="Silverstein K.A.T."/>
            <person name="Skrzypek M.S."/>
            <person name="Soll D."/>
            <person name="Staggs R."/>
            <person name="Stansfield I."/>
            <person name="Stumpf M.P.H."/>
            <person name="Sudbery P.E."/>
            <person name="Srikantha T."/>
            <person name="Zeng Q."/>
            <person name="Berman J."/>
            <person name="Berriman M."/>
            <person name="Heitman J."/>
            <person name="Gow N.A.R."/>
            <person name="Lorenz M.C."/>
            <person name="Birren B.W."/>
            <person name="Kellis M."/>
            <person name="Cuomo C.A."/>
        </authorList>
    </citation>
    <scope>NUCLEOTIDE SEQUENCE [LARGE SCALE GENOMIC DNA]</scope>
    <source>
        <strain>ATCC 11503 / BCRC 21390 / CBS 2605 / JCM 1781 / NBRC 1676 / NRRL YB-4239</strain>
    </source>
</reference>
<name>CSM3_LODEL</name>
<proteinExistence type="inferred from homology"/>
<comment type="function">
    <text evidence="1">Forms a fork protection complex (FPC) with TOF1 and which is required for chromosome segregation during meiosis and DNA damage repair. FPC coordinates leading and lagging strand synthesis and moves with the replication fork. FPC stabilizes replication forks in a configuration that is recognized by replication checkpoint sensors (By similarity).</text>
</comment>
<comment type="subunit">
    <text evidence="1">Component of the fork protection complex (FPC) consisting of TOF1 and CSM3.</text>
</comment>
<comment type="subcellular location">
    <subcellularLocation>
        <location evidence="1">Nucleus</location>
    </subcellularLocation>
</comment>
<comment type="similarity">
    <text evidence="3">Belongs to the CSM3 family.</text>
</comment>
<feature type="chain" id="PRO_0000301719" description="Chromosome segregation in meiosis protein 3">
    <location>
        <begin position="1"/>
        <end position="350"/>
    </location>
</feature>
<feature type="region of interest" description="Disordered" evidence="2">
    <location>
        <begin position="1"/>
        <end position="39"/>
    </location>
</feature>
<feature type="region of interest" description="Disordered" evidence="2">
    <location>
        <begin position="183"/>
        <end position="205"/>
    </location>
</feature>
<feature type="region of interest" description="Disordered" evidence="2">
    <location>
        <begin position="223"/>
        <end position="248"/>
    </location>
</feature>
<feature type="region of interest" description="Disordered" evidence="2">
    <location>
        <begin position="277"/>
        <end position="315"/>
    </location>
</feature>
<feature type="compositionally biased region" description="Polar residues" evidence="2">
    <location>
        <begin position="191"/>
        <end position="202"/>
    </location>
</feature>
<feature type="compositionally biased region" description="Polar residues" evidence="2">
    <location>
        <begin position="223"/>
        <end position="241"/>
    </location>
</feature>
<feature type="compositionally biased region" description="Low complexity" evidence="2">
    <location>
        <begin position="281"/>
        <end position="299"/>
    </location>
</feature>
<feature type="compositionally biased region" description="Polar residues" evidence="2">
    <location>
        <begin position="300"/>
        <end position="315"/>
    </location>
</feature>
<keyword id="KW-0131">Cell cycle</keyword>
<keyword id="KW-0227">DNA damage</keyword>
<keyword id="KW-0234">DNA repair</keyword>
<keyword id="KW-0236">DNA replication inhibitor</keyword>
<keyword id="KW-0469">Meiosis</keyword>
<keyword id="KW-0539">Nucleus</keyword>
<keyword id="KW-1185">Reference proteome</keyword>